<reference key="1">
    <citation type="submission" date="2006-12" db="EMBL/GenBank/DDBJ databases">
        <title>Complete sequence of chromosome 1 of Nocardioides sp. JS614.</title>
        <authorList>
            <person name="Copeland A."/>
            <person name="Lucas S."/>
            <person name="Lapidus A."/>
            <person name="Barry K."/>
            <person name="Detter J.C."/>
            <person name="Glavina del Rio T."/>
            <person name="Hammon N."/>
            <person name="Israni S."/>
            <person name="Dalin E."/>
            <person name="Tice H."/>
            <person name="Pitluck S."/>
            <person name="Thompson L.S."/>
            <person name="Brettin T."/>
            <person name="Bruce D."/>
            <person name="Han C."/>
            <person name="Tapia R."/>
            <person name="Schmutz J."/>
            <person name="Larimer F."/>
            <person name="Land M."/>
            <person name="Hauser L."/>
            <person name="Kyrpides N."/>
            <person name="Kim E."/>
            <person name="Mattes T."/>
            <person name="Gossett J."/>
            <person name="Richardson P."/>
        </authorList>
    </citation>
    <scope>NUCLEOTIDE SEQUENCE [LARGE SCALE GENOMIC DNA]</scope>
    <source>
        <strain>ATCC BAA-499 / JS614</strain>
    </source>
</reference>
<protein>
    <recommendedName>
        <fullName evidence="1">Putative glutamate--cysteine ligase 2-3</fullName>
        <ecNumber evidence="1">6.3.2.2</ecNumber>
    </recommendedName>
    <alternativeName>
        <fullName evidence="1">Gamma-glutamylcysteine synthetase 2-3</fullName>
        <shortName evidence="1">GCS 2-3</shortName>
        <shortName evidence="1">Gamma-GCS 2-3</shortName>
    </alternativeName>
</protein>
<dbReference type="EC" id="6.3.2.2" evidence="1"/>
<dbReference type="EMBL" id="CP000509">
    <property type="protein sequence ID" value="ABL83202.1"/>
    <property type="molecule type" value="Genomic_DNA"/>
</dbReference>
<dbReference type="RefSeq" id="WP_011757133.1">
    <property type="nucleotide sequence ID" value="NC_008699.1"/>
</dbReference>
<dbReference type="SMR" id="A1SN17"/>
<dbReference type="STRING" id="196162.Noca_3702"/>
<dbReference type="KEGG" id="nca:Noca_3702"/>
<dbReference type="eggNOG" id="COG2170">
    <property type="taxonomic scope" value="Bacteria"/>
</dbReference>
<dbReference type="HOGENOM" id="CLU_044848_1_1_11"/>
<dbReference type="OrthoDB" id="9769628at2"/>
<dbReference type="Proteomes" id="UP000000640">
    <property type="component" value="Chromosome"/>
</dbReference>
<dbReference type="GO" id="GO:0005524">
    <property type="term" value="F:ATP binding"/>
    <property type="evidence" value="ECO:0007669"/>
    <property type="project" value="UniProtKB-KW"/>
</dbReference>
<dbReference type="GO" id="GO:0004357">
    <property type="term" value="F:glutamate-cysteine ligase activity"/>
    <property type="evidence" value="ECO:0007669"/>
    <property type="project" value="UniProtKB-EC"/>
</dbReference>
<dbReference type="GO" id="GO:0042398">
    <property type="term" value="P:modified amino acid biosynthetic process"/>
    <property type="evidence" value="ECO:0007669"/>
    <property type="project" value="InterPro"/>
</dbReference>
<dbReference type="Gene3D" id="3.30.590.20">
    <property type="match status" value="1"/>
</dbReference>
<dbReference type="HAMAP" id="MF_01609">
    <property type="entry name" value="Glu_cys_ligase_2"/>
    <property type="match status" value="1"/>
</dbReference>
<dbReference type="InterPro" id="IPR050141">
    <property type="entry name" value="GCL_type2/YbdK_subfam"/>
</dbReference>
<dbReference type="InterPro" id="IPR006336">
    <property type="entry name" value="GCS2"/>
</dbReference>
<dbReference type="InterPro" id="IPR014746">
    <property type="entry name" value="Gln_synth/guanido_kin_cat_dom"/>
</dbReference>
<dbReference type="InterPro" id="IPR011793">
    <property type="entry name" value="YbdK"/>
</dbReference>
<dbReference type="NCBIfam" id="TIGR02050">
    <property type="entry name" value="gshA_cyan_rel"/>
    <property type="match status" value="1"/>
</dbReference>
<dbReference type="NCBIfam" id="NF010042">
    <property type="entry name" value="PRK13517.1-2"/>
    <property type="match status" value="1"/>
</dbReference>
<dbReference type="NCBIfam" id="NF010043">
    <property type="entry name" value="PRK13517.1-3"/>
    <property type="match status" value="1"/>
</dbReference>
<dbReference type="NCBIfam" id="NF010044">
    <property type="entry name" value="PRK13517.1-4"/>
    <property type="match status" value="1"/>
</dbReference>
<dbReference type="PANTHER" id="PTHR36510">
    <property type="entry name" value="GLUTAMATE--CYSTEINE LIGASE 2-RELATED"/>
    <property type="match status" value="1"/>
</dbReference>
<dbReference type="PANTHER" id="PTHR36510:SF1">
    <property type="entry name" value="GLUTAMATE--CYSTEINE LIGASE 2-RELATED"/>
    <property type="match status" value="1"/>
</dbReference>
<dbReference type="Pfam" id="PF04107">
    <property type="entry name" value="GCS2"/>
    <property type="match status" value="1"/>
</dbReference>
<dbReference type="SUPFAM" id="SSF55931">
    <property type="entry name" value="Glutamine synthetase/guanido kinase"/>
    <property type="match status" value="1"/>
</dbReference>
<proteinExistence type="inferred from homology"/>
<gene>
    <name type="ordered locus">Noca_3702</name>
</gene>
<keyword id="KW-0067">ATP-binding</keyword>
<keyword id="KW-0436">Ligase</keyword>
<keyword id="KW-0547">Nucleotide-binding</keyword>
<keyword id="KW-1185">Reference proteome</keyword>
<comment type="function">
    <text evidence="1">ATP-dependent carboxylate-amine ligase which exhibits weak glutamate--cysteine ligase activity.</text>
</comment>
<comment type="catalytic activity">
    <reaction evidence="1">
        <text>L-cysteine + L-glutamate + ATP = gamma-L-glutamyl-L-cysteine + ADP + phosphate + H(+)</text>
        <dbReference type="Rhea" id="RHEA:13285"/>
        <dbReference type="ChEBI" id="CHEBI:15378"/>
        <dbReference type="ChEBI" id="CHEBI:29985"/>
        <dbReference type="ChEBI" id="CHEBI:30616"/>
        <dbReference type="ChEBI" id="CHEBI:35235"/>
        <dbReference type="ChEBI" id="CHEBI:43474"/>
        <dbReference type="ChEBI" id="CHEBI:58173"/>
        <dbReference type="ChEBI" id="CHEBI:456216"/>
        <dbReference type="EC" id="6.3.2.2"/>
    </reaction>
</comment>
<comment type="similarity">
    <text evidence="1">Belongs to the glutamate--cysteine ligase type 2 family. YbdK subfamily.</text>
</comment>
<accession>A1SN17</accession>
<evidence type="ECO:0000255" key="1">
    <source>
        <dbReference type="HAMAP-Rule" id="MF_01609"/>
    </source>
</evidence>
<sequence length="376" mass="41962">MRIDFHASPEPTLGVEWEFALVDRRTRDLRNDATHLFARAKPRLPDPDKLHKELLRNTVEVVSGVCHTVGEAMADLRRTLEVVVPAGDDLDLDLYGGGTHPFASWTVQQLSEGHRYEELINRTQWWGRQMLIWGVHVHVGMPERDRVMAVLSSLLNFHPHLQALSASSPIWSGIDTGYASNRALMFQQLPTAGLPFQFERWSEFEAFVGDELVTGVIEELSEVRWDVRPAPRIGTLENRICDGVPDLADLSSLVALMHCLVVDLDTRAAAGETLPTMPPWHVQENKWRAARYGLDAIVITDAESNERLVTEDLADHLERLAPVADRLGCSEELAQVAQIPVRGASYQRQRAVAERTGGDLVAVVDSVVRELRAGLG</sequence>
<name>GCS23_NOCSJ</name>
<organism>
    <name type="scientific">Nocardioides sp. (strain ATCC BAA-499 / JS614)</name>
    <dbReference type="NCBI Taxonomy" id="196162"/>
    <lineage>
        <taxon>Bacteria</taxon>
        <taxon>Bacillati</taxon>
        <taxon>Actinomycetota</taxon>
        <taxon>Actinomycetes</taxon>
        <taxon>Propionibacteriales</taxon>
        <taxon>Nocardioidaceae</taxon>
        <taxon>Nocardioides</taxon>
    </lineage>
</organism>
<feature type="chain" id="PRO_0000291505" description="Putative glutamate--cysteine ligase 2-3">
    <location>
        <begin position="1"/>
        <end position="376"/>
    </location>
</feature>